<gene>
    <name type="primary">Phex</name>
    <name type="synonym">Hyp</name>
    <name type="synonym">Pex</name>
</gene>
<name>PHEX_MOUSE</name>
<protein>
    <recommendedName>
        <fullName evidence="9">Phosphate-regulating neutral endopeptidase PHEX</fullName>
    </recommendedName>
    <alternativeName>
        <fullName>Metalloendopeptidase homolog PEX</fullName>
        <ecNumber evidence="1">3.4.24.-</ecNumber>
    </alternativeName>
    <alternativeName>
        <fullName>Phosphate regulating neutral endopeptidase</fullName>
    </alternativeName>
    <alternativeName>
        <fullName>Vitamin D-resistant hypophosphatemic rickets protein</fullName>
    </alternativeName>
    <alternativeName>
        <fullName>X-linked hypophosphatemia protein</fullName>
        <shortName>HYP</shortName>
    </alternativeName>
</protein>
<evidence type="ECO:0000250" key="1">
    <source>
        <dbReference type="UniProtKB" id="P78562"/>
    </source>
</evidence>
<evidence type="ECO:0000255" key="2"/>
<evidence type="ECO:0000255" key="3">
    <source>
        <dbReference type="PROSITE-ProRule" id="PRU01233"/>
    </source>
</evidence>
<evidence type="ECO:0000255" key="4">
    <source>
        <dbReference type="PROSITE-ProRule" id="PRU10095"/>
    </source>
</evidence>
<evidence type="ECO:0000269" key="5">
    <source>
    </source>
</evidence>
<evidence type="ECO:0000269" key="6">
    <source>
    </source>
</evidence>
<evidence type="ECO:0000269" key="7">
    <source>
    </source>
</evidence>
<evidence type="ECO:0000269" key="8">
    <source>
    </source>
</evidence>
<evidence type="ECO:0000305" key="9"/>
<evidence type="ECO:0000305" key="10">
    <source>
    </source>
</evidence>
<keyword id="KW-0091">Biomineralization</keyword>
<keyword id="KW-1003">Cell membrane</keyword>
<keyword id="KW-1015">Disulfide bond</keyword>
<keyword id="KW-0325">Glycoprotein</keyword>
<keyword id="KW-0378">Hydrolase</keyword>
<keyword id="KW-0472">Membrane</keyword>
<keyword id="KW-0479">Metal-binding</keyword>
<keyword id="KW-0482">Metalloprotease</keyword>
<keyword id="KW-0645">Protease</keyword>
<keyword id="KW-1185">Reference proteome</keyword>
<keyword id="KW-0735">Signal-anchor</keyword>
<keyword id="KW-0812">Transmembrane</keyword>
<keyword id="KW-1133">Transmembrane helix</keyword>
<keyword id="KW-0862">Zinc</keyword>
<feature type="chain" id="PRO_0000078229" description="Phosphate-regulating neutral endopeptidase PHEX">
    <location>
        <begin position="1"/>
        <end position="749"/>
    </location>
</feature>
<feature type="topological domain" description="Cytoplasmic" evidence="2">
    <location>
        <begin position="1"/>
        <end position="20"/>
    </location>
</feature>
<feature type="transmembrane region" description="Helical; Signal-anchor for type II membrane protein" evidence="2">
    <location>
        <begin position="21"/>
        <end position="37"/>
    </location>
</feature>
<feature type="topological domain" description="Extracellular" evidence="2">
    <location>
        <begin position="38"/>
        <end position="749"/>
    </location>
</feature>
<feature type="domain" description="Peptidase M13" evidence="3">
    <location>
        <begin position="53"/>
        <end position="749"/>
    </location>
</feature>
<feature type="active site" evidence="3 4">
    <location>
        <position position="581"/>
    </location>
</feature>
<feature type="active site" description="Proton donor" evidence="3">
    <location>
        <position position="646"/>
    </location>
</feature>
<feature type="binding site" evidence="3 4">
    <location>
        <position position="580"/>
    </location>
    <ligand>
        <name>Zn(2+)</name>
        <dbReference type="ChEBI" id="CHEBI:29105"/>
        <note>catalytic</note>
    </ligand>
</feature>
<feature type="binding site" evidence="3 4">
    <location>
        <position position="584"/>
    </location>
    <ligand>
        <name>Zn(2+)</name>
        <dbReference type="ChEBI" id="CHEBI:29105"/>
        <note>catalytic</note>
    </ligand>
</feature>
<feature type="binding site" evidence="3">
    <location>
        <position position="642"/>
    </location>
    <ligand>
        <name>Zn(2+)</name>
        <dbReference type="ChEBI" id="CHEBI:29105"/>
        <note>catalytic</note>
    </ligand>
</feature>
<feature type="glycosylation site" description="N-linked (GlcNAc...) asparagine" evidence="2">
    <location>
        <position position="71"/>
    </location>
</feature>
<feature type="glycosylation site" description="N-linked (GlcNAc...) asparagine" evidence="2">
    <location>
        <position position="238"/>
    </location>
</feature>
<feature type="glycosylation site" description="N-linked (GlcNAc...) asparagine" evidence="2">
    <location>
        <position position="263"/>
    </location>
</feature>
<feature type="glycosylation site" description="N-linked (GlcNAc...) asparagine" evidence="2">
    <location>
        <position position="290"/>
    </location>
</feature>
<feature type="glycosylation site" description="N-linked (GlcNAc...) asparagine" evidence="2">
    <location>
        <position position="301"/>
    </location>
</feature>
<feature type="glycosylation site" description="N-linked (GlcNAc...) asparagine" evidence="2">
    <location>
        <position position="377"/>
    </location>
</feature>
<feature type="glycosylation site" description="N-linked (GlcNAc...) asparagine" evidence="2">
    <location>
        <position position="484"/>
    </location>
</feature>
<feature type="glycosylation site" description="N-linked (GlcNAc...) asparagine" evidence="2">
    <location>
        <position position="736"/>
    </location>
</feature>
<feature type="disulfide bond" evidence="3">
    <location>
        <begin position="54"/>
        <end position="59"/>
    </location>
</feature>
<feature type="disulfide bond" evidence="3">
    <location>
        <begin position="77"/>
        <end position="733"/>
    </location>
</feature>
<feature type="disulfide bond" evidence="3">
    <location>
        <begin position="85"/>
        <end position="693"/>
    </location>
</feature>
<feature type="disulfide bond" evidence="3">
    <location>
        <begin position="142"/>
        <end position="406"/>
    </location>
</feature>
<feature type="disulfide bond" evidence="3">
    <location>
        <begin position="617"/>
        <end position="746"/>
    </location>
</feature>
<feature type="sequence conflict" description="In Ref. 3; AAB47750." evidence="9" ref="3">
    <original>D</original>
    <variation>V</variation>
    <location>
        <position position="430"/>
    </location>
</feature>
<organism>
    <name type="scientific">Mus musculus</name>
    <name type="common">Mouse</name>
    <dbReference type="NCBI Taxonomy" id="10090"/>
    <lineage>
        <taxon>Eukaryota</taxon>
        <taxon>Metazoa</taxon>
        <taxon>Chordata</taxon>
        <taxon>Craniata</taxon>
        <taxon>Vertebrata</taxon>
        <taxon>Euteleostomi</taxon>
        <taxon>Mammalia</taxon>
        <taxon>Eutheria</taxon>
        <taxon>Euarchontoglires</taxon>
        <taxon>Glires</taxon>
        <taxon>Rodentia</taxon>
        <taxon>Myomorpha</taxon>
        <taxon>Muroidea</taxon>
        <taxon>Muridae</taxon>
        <taxon>Murinae</taxon>
        <taxon>Mus</taxon>
        <taxon>Mus</taxon>
    </lineage>
</organism>
<reference key="1">
    <citation type="journal article" date="1996" name="Genomics">
        <title>cDNA cloning of the murine Pex gene implicated in X-linked hypophosphatemia and evidence for expression in bone.</title>
        <authorList>
            <person name="Du L."/>
            <person name="Desbarats M."/>
            <person name="Viel J."/>
            <person name="Glorieux F.H."/>
            <person name="Cawthorn C."/>
            <person name="Ecarot B."/>
        </authorList>
    </citation>
    <scope>NUCLEOTIDE SEQUENCE [MRNA]</scope>
</reference>
<reference key="2">
    <citation type="journal article" date="1997" name="Hum. Mol. Genet.">
        <title>Pex gene deletions in Gy and Hyp mice provide mouse models for X-linked hypophosphatemia.</title>
        <authorList>
            <person name="Strom T.M."/>
            <person name="Francis F."/>
            <person name="Lorenz B."/>
            <person name="Boeddrich A."/>
            <person name="Econs M.J."/>
            <person name="Lehrach H."/>
            <person name="Meitinger T."/>
        </authorList>
    </citation>
    <scope>NUCLEOTIDE SEQUENCE [GENOMIC DNA / MRNA]</scope>
</reference>
<reference key="3">
    <citation type="journal article" date="1997" name="J. Clin. Invest.">
        <title>Pex/PEX tissue distribution and evidence for a deletion in the 3' region of the Pex gene in X-linked hypophosphatemic mice.</title>
        <authorList>
            <person name="Beck L."/>
            <person name="Soumounou Y."/>
            <person name="Martel J."/>
            <person name="Krishnamurthy G."/>
            <person name="Gauthier C."/>
            <person name="Goodyer C.G."/>
            <person name="Tenenhouse H.S."/>
        </authorList>
    </citation>
    <scope>NUCLEOTIDE SEQUENCE [MRNA]</scope>
    <source>
        <strain>C57BL/6J</strain>
    </source>
</reference>
<reference key="4">
    <citation type="journal article" date="2001" name="Endocrinology">
        <title>Osteomalacia in hyp mice is associated with abnormal phex expression and with altered bone matrix protein expression and deposition.</title>
        <authorList>
            <person name="Miao D."/>
            <person name="Bai X."/>
            <person name="Panda D."/>
            <person name="McKee M."/>
            <person name="Karaplis A."/>
            <person name="Goltzman D."/>
        </authorList>
    </citation>
    <scope>FUNCTION</scope>
    <scope>SUBCELLULAR LOCATION</scope>
    <scope>TISSUE SPECIFICITY</scope>
</reference>
<reference key="5">
    <citation type="journal article" date="2002" name="J. Bone Miner. Res.">
        <title>Ontogeny of Phex/PHEX protein expression in mouse embryo and subcellular localization in osteoblasts.</title>
        <authorList>
            <person name="Thompson D.L."/>
            <person name="Sabbagh Y."/>
            <person name="Tenenhouse H.S."/>
            <person name="Roche P.C."/>
            <person name="Drezner M.K."/>
            <person name="Salisbury J.L."/>
            <person name="Grande J.P."/>
            <person name="Poeschla E.M."/>
            <person name="Kumar R."/>
        </authorList>
    </citation>
    <scope>SUBCELLULAR LOCATION</scope>
    <scope>TISSUE SPECIFICITY</scope>
    <scope>DEVELOPMENTAL STAGE</scope>
    <scope>GLYCOSYLATION</scope>
</reference>
<reference key="6">
    <citation type="journal article" date="2008" name="J. Bone Miner. Res.">
        <title>MEPE-ASARM peptides control extracellular matrix mineralization by binding to hydroxyapatite: an inhibition regulated by PHEX cleavage of ASARM.</title>
        <authorList>
            <person name="Addison W.N."/>
            <person name="Nakano Y."/>
            <person name="Loisel T."/>
            <person name="Crine P."/>
            <person name="McKee M.D."/>
        </authorList>
    </citation>
    <scope>TISSUE SPECIFICITY</scope>
</reference>
<reference key="7">
    <citation type="journal article" date="2010" name="Cell">
        <title>A tissue-specific atlas of mouse protein phosphorylation and expression.</title>
        <authorList>
            <person name="Huttlin E.L."/>
            <person name="Jedrychowski M.P."/>
            <person name="Elias J.E."/>
            <person name="Goswami T."/>
            <person name="Rad R."/>
            <person name="Beausoleil S.A."/>
            <person name="Villen J."/>
            <person name="Haas W."/>
            <person name="Sowa M.E."/>
            <person name="Gygi S.P."/>
        </authorList>
    </citation>
    <scope>IDENTIFICATION BY MASS SPECTROMETRY [LARGE SCALE ANALYSIS]</scope>
    <source>
        <tissue>Lung</tissue>
    </source>
</reference>
<reference key="8">
    <citation type="journal article" date="2015" name="Bone">
        <title>Age dependent regulation of bone-mass and renal function by the MEPE ASARM-motif.</title>
        <authorList>
            <person name="Zelenchuk L.V."/>
            <person name="Hedge A.M."/>
            <person name="Rowe P.S."/>
        </authorList>
    </citation>
    <scope>FUNCTION</scope>
</reference>
<sequence>MEAETGSTMETGKGTNRGIRIALALFIGGTLVLGTLLFLVSQGLLSFQAKQEYCLKPECIEAAAAIMSKVNLSVDPCENFFRFACDGWISNNPIPEDMPSYGVYPWLRHNVDLKLKALLEKSVSRRRDTEAVQKAKILYSSCMNEKAIEKADAKPLLHILRHSPFRWPVLEANIGPEGVWSERKFSLLQTLATFRGQYSNSVFIRLYVSPDDKASNEHILKLDQATLSLAVREDFLDNTTEAKSYRDALYKFMVDTAVLLGANSSRAEHDMKSVLRLEIKIAEIMIPHENRTSEAMYNKMNISELSAMIPQFDWLGYIKKVIDTRLYPHLKDIGPSENVVVRVPQYFKDLFRILGAERKKTIANYLVWRMVYSRIPNLSRRFQYRWLEFSRVIQGTTTLLPQWDKCVNFIESALPYVVGKMFVNVHFQEDKKEMMEELIEGVRWAFIDMLEKENEWMDAGTKRKAQEKARAVLAKVGYPEFIMNDTYVNEDLKAIKFSESDYFGNVLQTRKYLAQSDFFWLRKAVPKTEWFTNPTTVNAFYSASTNQIRFPAGELQKPFFWGTEYPRSLSYGAIGVIVGHEFTHGFDNNGRKYDKNGNLDPWWSVESEEKFKEKTKCMINQYSNYYWKKAGLNVKGKRTLGENIADNGGLREAFRAYRKWINDRRQGVEEPLLPGITFTNNQLFFLSYAHVRCNSYRPEAAREQVQIGAHSPPQFRVNGAISNFEEFQKAFNCPRNSTMNRGADSCRLW</sequence>
<comment type="function">
    <text evidence="1 5 8 10">Peptidase that cleaves SIBLING (small integrin-binding ligand, N-linked glycoprotein)-derived ASARM peptides, thus regulating their biological activity (By similarity). Cleaves ASARM peptides between Ser and Glu or Asp residues (By similarity). Regulates osteogenic cell differentiation and bone mineralization through the cleavage of the MEPE-derived ASARM peptide (PubMed:11159866, PubMed:18597632, PubMed:26051469). Promotes dentin mineralization and renal phosphate reabsorption by cleaving DMP1- and MEPE-derived ASARM peptides (PubMed:26051469). Inhibits the cleavage of MEPE by CTSB/cathepsin B thus preventing MEPE degradation (By similarity).</text>
</comment>
<comment type="cofactor">
    <cofactor evidence="1">
        <name>Zn(2+)</name>
        <dbReference type="ChEBI" id="CHEBI:29105"/>
    </cofactor>
    <text evidence="1">Binds 1 zinc ion per subunit.</text>
</comment>
<comment type="subunit">
    <text evidence="1">Interacts with MEPE; the interaction is zinc-dependent (via ASARM motif).</text>
</comment>
<comment type="subcellular location">
    <subcellularLocation>
        <location evidence="6">Cell membrane</location>
        <topology evidence="9">Single-pass type II membrane protein</topology>
    </subcellularLocation>
</comment>
<comment type="tissue specificity">
    <text evidence="5 6 7">Expressed in bone, specifically in the osteoid and in osteocytes (PubMed:11159866, PubMed:18597632). Expressed in teeth, specifically in odontoblasts and ameloblasts (PubMed:11811562). Expressed moderately by macrophages in the liver and has minimal expression in brown adipose tissue (PubMed:11811562). Also expressed in suprabasal layers of the skin (PubMed:11811562).</text>
</comment>
<comment type="developmental stage">
    <text evidence="6">Detected at 16 and 18 days post coitum (dpc) in vertebrae osteoblasts. Detected in calvarial tissue and in the stratum spinosum and granulosum of the overlaying epidermis at 18 dpc. Detected at postnatal day 14 in osteoblasts and osteocytes of the calvarium. Detected in tibias at postnatal day 14 in osteoblasts and a lesser degree in osteocytes, however by postnatal day 84 it is detected in osteocytes in compact bone. Detected in teeth at postnatal day 14 in odontoblasts and ameloblasts. By postnatal day 84, expression can still be detected in odontoblasts however little to no expression can be detected in ameloblasts. Detected at 18 dpc at moderate levels in macrophages within the liver, with minimal expression in brown adipose tissue. Detected at 18 dpc in suprabasal layers of the skin.</text>
</comment>
<comment type="PTM">
    <text evidence="6">N-glycosylated.</text>
</comment>
<comment type="similarity">
    <text evidence="3 9">Belongs to the peptidase M13 family.</text>
</comment>
<dbReference type="EC" id="3.4.24.-" evidence="1"/>
<dbReference type="EMBL" id="U49908">
    <property type="protein sequence ID" value="AAC36502.1"/>
    <property type="molecule type" value="mRNA"/>
</dbReference>
<dbReference type="EMBL" id="U73910">
    <property type="protein sequence ID" value="AAC25962.1"/>
    <property type="molecule type" value="mRNA"/>
</dbReference>
<dbReference type="EMBL" id="U73912">
    <property type="protein sequence ID" value="AAC25964.1"/>
    <property type="molecule type" value="Genomic_DNA"/>
</dbReference>
<dbReference type="EMBL" id="U73913">
    <property type="protein sequence ID" value="AAC25965.1"/>
    <property type="molecule type" value="Genomic_DNA"/>
</dbReference>
<dbReference type="EMBL" id="U73914">
    <property type="protein sequence ID" value="AAC25966.1"/>
    <property type="molecule type" value="Genomic_DNA"/>
</dbReference>
<dbReference type="EMBL" id="U73911">
    <property type="protein sequence ID" value="AAC25963.1"/>
    <property type="molecule type" value="Genomic_DNA"/>
</dbReference>
<dbReference type="EMBL" id="U73915">
    <property type="protein sequence ID" value="AAC25967.1"/>
    <property type="molecule type" value="Genomic_DNA"/>
</dbReference>
<dbReference type="EMBL" id="U75646">
    <property type="protein sequence ID" value="AAB47750.1"/>
    <property type="molecule type" value="mRNA"/>
</dbReference>
<dbReference type="CCDS" id="CCDS30497.1"/>
<dbReference type="RefSeq" id="NP_035207.1">
    <property type="nucleotide sequence ID" value="NM_011077.2"/>
</dbReference>
<dbReference type="SMR" id="P70669"/>
<dbReference type="BioGRID" id="202143">
    <property type="interactions" value="1"/>
</dbReference>
<dbReference type="FunCoup" id="P70669">
    <property type="interactions" value="122"/>
</dbReference>
<dbReference type="STRING" id="10090.ENSMUSP00000078863"/>
<dbReference type="MEROPS" id="M13.091"/>
<dbReference type="GlyCosmos" id="P70669">
    <property type="glycosylation" value="8 sites, No reported glycans"/>
</dbReference>
<dbReference type="GlyGen" id="P70669">
    <property type="glycosylation" value="8 sites, 4 N-linked glycans (4 sites)"/>
</dbReference>
<dbReference type="iPTMnet" id="P70669"/>
<dbReference type="PhosphoSitePlus" id="P70669"/>
<dbReference type="jPOST" id="P70669"/>
<dbReference type="PaxDb" id="10090-ENSMUSP00000078863"/>
<dbReference type="ProteomicsDB" id="287699"/>
<dbReference type="Antibodypedia" id="24481">
    <property type="antibodies" value="132 antibodies from 26 providers"/>
</dbReference>
<dbReference type="DNASU" id="18675"/>
<dbReference type="Ensembl" id="ENSMUST00000079945.11">
    <property type="protein sequence ID" value="ENSMUSP00000078863.5"/>
    <property type="gene ID" value="ENSMUSG00000057457.12"/>
</dbReference>
<dbReference type="GeneID" id="18675"/>
<dbReference type="KEGG" id="mmu:18675"/>
<dbReference type="UCSC" id="uc009ury.1">
    <property type="organism name" value="mouse"/>
</dbReference>
<dbReference type="AGR" id="MGI:107489"/>
<dbReference type="CTD" id="5251"/>
<dbReference type="MGI" id="MGI:107489">
    <property type="gene designation" value="Phex"/>
</dbReference>
<dbReference type="VEuPathDB" id="HostDB:ENSMUSG00000057457"/>
<dbReference type="eggNOG" id="KOG3624">
    <property type="taxonomic scope" value="Eukaryota"/>
</dbReference>
<dbReference type="GeneTree" id="ENSGT00940000157313"/>
<dbReference type="HOGENOM" id="CLU_006187_4_1_1"/>
<dbReference type="InParanoid" id="P70669"/>
<dbReference type="OMA" id="QAKPEYC"/>
<dbReference type="OrthoDB" id="6475849at2759"/>
<dbReference type="PhylomeDB" id="P70669"/>
<dbReference type="TreeFam" id="TF315192"/>
<dbReference type="BRENDA" id="3.4.24.B15">
    <property type="organism ID" value="3474"/>
</dbReference>
<dbReference type="BioGRID-ORCS" id="18675">
    <property type="hits" value="2 hits in 80 CRISPR screens"/>
</dbReference>
<dbReference type="ChiTaRS" id="Phex">
    <property type="organism name" value="mouse"/>
</dbReference>
<dbReference type="PRO" id="PR:P70669"/>
<dbReference type="Proteomes" id="UP000000589">
    <property type="component" value="Chromosome X"/>
</dbReference>
<dbReference type="RNAct" id="P70669">
    <property type="molecule type" value="protein"/>
</dbReference>
<dbReference type="Bgee" id="ENSMUSG00000057457">
    <property type="expression patterns" value="Expressed in molar tooth and 74 other cell types or tissues"/>
</dbReference>
<dbReference type="ExpressionAtlas" id="P70669">
    <property type="expression patterns" value="baseline and differential"/>
</dbReference>
<dbReference type="GO" id="GO:0005783">
    <property type="term" value="C:endoplasmic reticulum"/>
    <property type="evidence" value="ECO:0000314"/>
    <property type="project" value="MGI"/>
</dbReference>
<dbReference type="GO" id="GO:0005794">
    <property type="term" value="C:Golgi apparatus"/>
    <property type="evidence" value="ECO:0000314"/>
    <property type="project" value="MGI"/>
</dbReference>
<dbReference type="GO" id="GO:0048471">
    <property type="term" value="C:perinuclear region of cytoplasm"/>
    <property type="evidence" value="ECO:0000314"/>
    <property type="project" value="MGI"/>
</dbReference>
<dbReference type="GO" id="GO:0005886">
    <property type="term" value="C:plasma membrane"/>
    <property type="evidence" value="ECO:0007669"/>
    <property type="project" value="UniProtKB-SubCell"/>
</dbReference>
<dbReference type="GO" id="GO:0046872">
    <property type="term" value="F:metal ion binding"/>
    <property type="evidence" value="ECO:0007669"/>
    <property type="project" value="UniProtKB-KW"/>
</dbReference>
<dbReference type="GO" id="GO:0004222">
    <property type="term" value="F:metalloendopeptidase activity"/>
    <property type="evidence" value="ECO:0007669"/>
    <property type="project" value="InterPro"/>
</dbReference>
<dbReference type="GO" id="GO:0060348">
    <property type="term" value="P:bone development"/>
    <property type="evidence" value="ECO:0007669"/>
    <property type="project" value="Ensembl"/>
</dbReference>
<dbReference type="GO" id="GO:0030282">
    <property type="term" value="P:bone mineralization"/>
    <property type="evidence" value="ECO:0000315"/>
    <property type="project" value="MGI"/>
</dbReference>
<dbReference type="GO" id="GO:0071374">
    <property type="term" value="P:cellular response to parathyroid hormone stimulus"/>
    <property type="evidence" value="ECO:0007669"/>
    <property type="project" value="Ensembl"/>
</dbReference>
<dbReference type="GO" id="GO:0071305">
    <property type="term" value="P:cellular response to vitamin D"/>
    <property type="evidence" value="ECO:0007669"/>
    <property type="project" value="Ensembl"/>
</dbReference>
<dbReference type="GO" id="GO:0030324">
    <property type="term" value="P:lung development"/>
    <property type="evidence" value="ECO:0007669"/>
    <property type="project" value="Ensembl"/>
</dbReference>
<dbReference type="GO" id="GO:0042476">
    <property type="term" value="P:odontogenesis"/>
    <property type="evidence" value="ECO:0000315"/>
    <property type="project" value="MGI"/>
</dbReference>
<dbReference type="GO" id="GO:0019637">
    <property type="term" value="P:organophosphate metabolic process"/>
    <property type="evidence" value="ECO:0000315"/>
    <property type="project" value="MGI"/>
</dbReference>
<dbReference type="GO" id="GO:0006508">
    <property type="term" value="P:proteolysis"/>
    <property type="evidence" value="ECO:0007669"/>
    <property type="project" value="UniProtKB-KW"/>
</dbReference>
<dbReference type="GO" id="GO:0060416">
    <property type="term" value="P:response to growth hormone"/>
    <property type="evidence" value="ECO:0007669"/>
    <property type="project" value="Ensembl"/>
</dbReference>
<dbReference type="GO" id="GO:1990418">
    <property type="term" value="P:response to insulin-like growth factor stimulus"/>
    <property type="evidence" value="ECO:0007669"/>
    <property type="project" value="Ensembl"/>
</dbReference>
<dbReference type="GO" id="GO:1904383">
    <property type="term" value="P:response to sodium phosphate"/>
    <property type="evidence" value="ECO:0007669"/>
    <property type="project" value="Ensembl"/>
</dbReference>
<dbReference type="CDD" id="cd08662">
    <property type="entry name" value="M13"/>
    <property type="match status" value="1"/>
</dbReference>
<dbReference type="Gene3D" id="3.40.390.10">
    <property type="entry name" value="Collagenase (Catalytic Domain)"/>
    <property type="match status" value="1"/>
</dbReference>
<dbReference type="Gene3D" id="1.10.1380.10">
    <property type="entry name" value="Neutral endopeptidase , domain2"/>
    <property type="match status" value="1"/>
</dbReference>
<dbReference type="InterPro" id="IPR024079">
    <property type="entry name" value="MetalloPept_cat_dom_sf"/>
</dbReference>
<dbReference type="InterPro" id="IPR000718">
    <property type="entry name" value="Peptidase_M13"/>
</dbReference>
<dbReference type="InterPro" id="IPR018497">
    <property type="entry name" value="Peptidase_M13_C"/>
</dbReference>
<dbReference type="InterPro" id="IPR042089">
    <property type="entry name" value="Peptidase_M13_dom_2"/>
</dbReference>
<dbReference type="InterPro" id="IPR008753">
    <property type="entry name" value="Peptidase_M13_N"/>
</dbReference>
<dbReference type="PANTHER" id="PTHR11733:SF133">
    <property type="entry name" value="PHOSPHATE-REGULATING NEUTRAL ENDOPEPTIDASE PHEX"/>
    <property type="match status" value="1"/>
</dbReference>
<dbReference type="PANTHER" id="PTHR11733">
    <property type="entry name" value="ZINC METALLOPROTEASE FAMILY M13 NEPRILYSIN-RELATED"/>
    <property type="match status" value="1"/>
</dbReference>
<dbReference type="Pfam" id="PF01431">
    <property type="entry name" value="Peptidase_M13"/>
    <property type="match status" value="1"/>
</dbReference>
<dbReference type="Pfam" id="PF05649">
    <property type="entry name" value="Peptidase_M13_N"/>
    <property type="match status" value="1"/>
</dbReference>
<dbReference type="PRINTS" id="PR00786">
    <property type="entry name" value="NEPRILYSIN"/>
</dbReference>
<dbReference type="SUPFAM" id="SSF55486">
    <property type="entry name" value="Metalloproteases ('zincins'), catalytic domain"/>
    <property type="match status" value="1"/>
</dbReference>
<dbReference type="PROSITE" id="PS51885">
    <property type="entry name" value="NEPRILYSIN"/>
    <property type="match status" value="1"/>
</dbReference>
<dbReference type="PROSITE" id="PS00142">
    <property type="entry name" value="ZINC_PROTEASE"/>
    <property type="match status" value="1"/>
</dbReference>
<proteinExistence type="evidence at protein level"/>
<accession>P70669</accession>
<accession>P97439</accession>